<evidence type="ECO:0000255" key="1">
    <source>
        <dbReference type="HAMAP-Rule" id="MF_01224"/>
    </source>
</evidence>
<dbReference type="EC" id="4.6.1.17" evidence="1"/>
<dbReference type="EMBL" id="CP000901">
    <property type="protein sequence ID" value="ABX88388.1"/>
    <property type="molecule type" value="Genomic_DNA"/>
</dbReference>
<dbReference type="RefSeq" id="WP_002210772.1">
    <property type="nucleotide sequence ID" value="NZ_CP009935.1"/>
</dbReference>
<dbReference type="SMR" id="A9R3D8"/>
<dbReference type="GeneID" id="57977299"/>
<dbReference type="KEGG" id="ypg:YpAngola_A1435"/>
<dbReference type="PATRIC" id="fig|349746.12.peg.2401"/>
<dbReference type="UniPathway" id="UPA00344"/>
<dbReference type="GO" id="GO:0061799">
    <property type="term" value="F:cyclic pyranopterin monophosphate synthase activity"/>
    <property type="evidence" value="ECO:0007669"/>
    <property type="project" value="UniProtKB-UniRule"/>
</dbReference>
<dbReference type="GO" id="GO:0006777">
    <property type="term" value="P:Mo-molybdopterin cofactor biosynthetic process"/>
    <property type="evidence" value="ECO:0007669"/>
    <property type="project" value="UniProtKB-UniRule"/>
</dbReference>
<dbReference type="CDD" id="cd01420">
    <property type="entry name" value="MoaC_PE"/>
    <property type="match status" value="1"/>
</dbReference>
<dbReference type="FunFam" id="3.30.70.640:FF:000001">
    <property type="entry name" value="Cyclic pyranopterin monophosphate synthase"/>
    <property type="match status" value="1"/>
</dbReference>
<dbReference type="Gene3D" id="3.30.70.640">
    <property type="entry name" value="Molybdopterin cofactor biosynthesis C (MoaC) domain"/>
    <property type="match status" value="1"/>
</dbReference>
<dbReference type="HAMAP" id="MF_01224_B">
    <property type="entry name" value="MoaC_B"/>
    <property type="match status" value="1"/>
</dbReference>
<dbReference type="InterPro" id="IPR023045">
    <property type="entry name" value="MoaC"/>
</dbReference>
<dbReference type="InterPro" id="IPR047594">
    <property type="entry name" value="MoaC_bact/euk"/>
</dbReference>
<dbReference type="InterPro" id="IPR036522">
    <property type="entry name" value="MoaC_sf"/>
</dbReference>
<dbReference type="InterPro" id="IPR050105">
    <property type="entry name" value="MoCo_biosynth_MoaA/MoaC"/>
</dbReference>
<dbReference type="InterPro" id="IPR002820">
    <property type="entry name" value="Mopterin_CF_biosynth-C_dom"/>
</dbReference>
<dbReference type="NCBIfam" id="TIGR00581">
    <property type="entry name" value="moaC"/>
    <property type="match status" value="1"/>
</dbReference>
<dbReference type="NCBIfam" id="NF006870">
    <property type="entry name" value="PRK09364.1"/>
    <property type="match status" value="1"/>
</dbReference>
<dbReference type="PANTHER" id="PTHR22960">
    <property type="entry name" value="MOLYBDOPTERIN COFACTOR SYNTHESIS PROTEIN A"/>
    <property type="match status" value="1"/>
</dbReference>
<dbReference type="Pfam" id="PF01967">
    <property type="entry name" value="MoaC"/>
    <property type="match status" value="1"/>
</dbReference>
<dbReference type="SUPFAM" id="SSF55040">
    <property type="entry name" value="Molybdenum cofactor biosynthesis protein C, MoaC"/>
    <property type="match status" value="1"/>
</dbReference>
<organism>
    <name type="scientific">Yersinia pestis bv. Antiqua (strain Angola)</name>
    <dbReference type="NCBI Taxonomy" id="349746"/>
    <lineage>
        <taxon>Bacteria</taxon>
        <taxon>Pseudomonadati</taxon>
        <taxon>Pseudomonadota</taxon>
        <taxon>Gammaproteobacteria</taxon>
        <taxon>Enterobacterales</taxon>
        <taxon>Yersiniaceae</taxon>
        <taxon>Yersinia</taxon>
    </lineage>
</organism>
<keyword id="KW-0456">Lyase</keyword>
<keyword id="KW-0501">Molybdenum cofactor biosynthesis</keyword>
<sequence>MTQLTHINTAGEAHMVDVSAKNETVREARAEAFVDMQAATLAMIIDGSHHKGDVFATARIAGIQAAKKTWELIPLCHPLLLTKVEVKLEAQPEHNRVRIETCCRLTGKTGVEMEALTAASVAALTIYDMCKAVQKDMIIGPVRLLTKSGGKSGDFKVDI</sequence>
<protein>
    <recommendedName>
        <fullName evidence="1">Cyclic pyranopterin monophosphate synthase</fullName>
        <ecNumber evidence="1">4.6.1.17</ecNumber>
    </recommendedName>
    <alternativeName>
        <fullName evidence="1">Molybdenum cofactor biosynthesis protein C</fullName>
    </alternativeName>
</protein>
<comment type="function">
    <text evidence="1">Catalyzes the conversion of (8S)-3',8-cyclo-7,8-dihydroguanosine 5'-triphosphate to cyclic pyranopterin monophosphate (cPMP).</text>
</comment>
<comment type="catalytic activity">
    <reaction evidence="1">
        <text>(8S)-3',8-cyclo-7,8-dihydroguanosine 5'-triphosphate = cyclic pyranopterin phosphate + diphosphate</text>
        <dbReference type="Rhea" id="RHEA:49580"/>
        <dbReference type="ChEBI" id="CHEBI:33019"/>
        <dbReference type="ChEBI" id="CHEBI:59648"/>
        <dbReference type="ChEBI" id="CHEBI:131766"/>
        <dbReference type="EC" id="4.6.1.17"/>
    </reaction>
</comment>
<comment type="pathway">
    <text evidence="1">Cofactor biosynthesis; molybdopterin biosynthesis.</text>
</comment>
<comment type="subunit">
    <text evidence="1">Homohexamer; trimer of dimers.</text>
</comment>
<comment type="similarity">
    <text evidence="1">Belongs to the MoaC family.</text>
</comment>
<proteinExistence type="inferred from homology"/>
<name>MOAC_YERPG</name>
<accession>A9R3D8</accession>
<reference key="1">
    <citation type="journal article" date="2010" name="J. Bacteriol.">
        <title>Genome sequence of the deep-rooted Yersinia pestis strain Angola reveals new insights into the evolution and pangenome of the plague bacterium.</title>
        <authorList>
            <person name="Eppinger M."/>
            <person name="Worsham P.L."/>
            <person name="Nikolich M.P."/>
            <person name="Riley D.R."/>
            <person name="Sebastian Y."/>
            <person name="Mou S."/>
            <person name="Achtman M."/>
            <person name="Lindler L.E."/>
            <person name="Ravel J."/>
        </authorList>
    </citation>
    <scope>NUCLEOTIDE SEQUENCE [LARGE SCALE GENOMIC DNA]</scope>
    <source>
        <strain>Angola</strain>
    </source>
</reference>
<gene>
    <name evidence="1" type="primary">moaC</name>
    <name type="ordered locus">YpAngola_A1435</name>
</gene>
<feature type="chain" id="PRO_1000139310" description="Cyclic pyranopterin monophosphate synthase">
    <location>
        <begin position="1"/>
        <end position="159"/>
    </location>
</feature>
<feature type="active site" evidence="1">
    <location>
        <position position="128"/>
    </location>
</feature>
<feature type="binding site" evidence="1">
    <location>
        <begin position="75"/>
        <end position="77"/>
    </location>
    <ligand>
        <name>substrate</name>
    </ligand>
</feature>
<feature type="binding site" evidence="1">
    <location>
        <begin position="113"/>
        <end position="114"/>
    </location>
    <ligand>
        <name>substrate</name>
    </ligand>
</feature>